<organism evidence="13">
    <name type="scientific">Trypanosoma brucei brucei</name>
    <dbReference type="NCBI Taxonomy" id="5702"/>
    <lineage>
        <taxon>Eukaryota</taxon>
        <taxon>Discoba</taxon>
        <taxon>Euglenozoa</taxon>
        <taxon>Kinetoplastea</taxon>
        <taxon>Metakinetoplastina</taxon>
        <taxon>Trypanosomatida</taxon>
        <taxon>Trypanosomatidae</taxon>
        <taxon>Trypanosoma</taxon>
    </lineage>
</organism>
<accession>Q9GPE9</accession>
<accession>A0A2U3T1M9</accession>
<keyword id="KW-0002">3D-structure</keyword>
<keyword id="KW-0066">ATP synthesis</keyword>
<keyword id="KW-0067">ATP-binding</keyword>
<keyword id="KW-0139">CF(1)</keyword>
<keyword id="KW-0903">Direct protein sequencing</keyword>
<keyword id="KW-0375">Hydrogen ion transport</keyword>
<keyword id="KW-0406">Ion transport</keyword>
<keyword id="KW-0472">Membrane</keyword>
<keyword id="KW-0496">Mitochondrion</keyword>
<keyword id="KW-0999">Mitochondrion inner membrane</keyword>
<keyword id="KW-0547">Nucleotide-binding</keyword>
<keyword id="KW-0809">Transit peptide</keyword>
<keyword id="KW-1278">Translocase</keyword>
<keyword id="KW-0813">Transport</keyword>
<proteinExistence type="evidence at protein level"/>
<gene>
    <name evidence="8" type="ORF">Tb427.03.1380</name>
</gene>
<comment type="function">
    <text evidence="4 5 6 9">Mitochondrial membrane ATP synthase (F(1)F(o) ATP synthase) produces ATP from ADP in the presence of a proton gradient across the membrane which is generated by electron transport complexes of the respiratory chain (PubMed:19436713, PubMed:29247468). F-type ATPases consist of two structural domains, F(1) - containing the extramembraneous catalytic core, and F(o) - containing the membrane proton channel, linked together by a central stalk and a peripheral stalk (PubMed:19436713, PubMed:29247468, PubMed:29440423). During catalysis, ATP synthesis in the catalytic domain of F(1) is coupled via a rotary mechanism of the central stalk subunits to proton translocation. Subunits alpha and beta form the catalytic core in F(1) (PubMed:19436713, PubMed:29440423). Rotation of the central stalk against the surrounding alpha(3)beta(3) subunits leads to hydrolysis of ATP in three separate catalytic sites on the beta subunits (Probable). Contrary to the procyclic, insect form that requires F(1)F(o) ATP synthase for ATP synthesis, the bloodstream form relies on ATP hydrolysis by F(1)F(o) ATP synthase to maintain its mitochondrial membrane potential (PubMed:29247468).</text>
</comment>
<comment type="catalytic activity">
    <reaction evidence="2 11">
        <text>ATP + H2O + 4 H(+)(in) = ADP + phosphate + 5 H(+)(out)</text>
        <dbReference type="Rhea" id="RHEA:57720"/>
        <dbReference type="ChEBI" id="CHEBI:15377"/>
        <dbReference type="ChEBI" id="CHEBI:15378"/>
        <dbReference type="ChEBI" id="CHEBI:30616"/>
        <dbReference type="ChEBI" id="CHEBI:43474"/>
        <dbReference type="ChEBI" id="CHEBI:456216"/>
        <dbReference type="EC" id="7.1.2.2"/>
    </reaction>
</comment>
<comment type="subunit">
    <text evidence="4 5 6">F-type ATPases have 2 components, F(1) - the catalytic core - and F(o) - the membrane proton channel. F(1) has five subunits: alpha(3), beta(3), gamma(1), delta(1), epsilon(1), plus the additional subunit P18 (Tb427.05.1710) that is not present in F(1)F(o) ATP synthase from metazoa (PubMed:19436713, PubMed:29247468, PubMed:29440423). Subunit P18 (Tb927.5.1710) interacts with the alpha subunit with a 1:1 stoichiometry; the interaction is direct (PubMed:29440423). Subunit gamma is part of the central stalk (PubMed:29440423). F(o) has three main subunits: a, b and c (PubMed:19436713). The trypanosomal ATPase complex contains additional subunits that are not present in the F(1)F(o) ATP synthase from metazoa (PubMed:19436713, PubMed:29247468, PubMed:29440423).</text>
</comment>
<comment type="subcellular location">
    <subcellularLocation>
        <location>Mitochondrion</location>
    </subcellularLocation>
    <subcellularLocation>
        <location evidence="3 4 5 6">Mitochondrion inner membrane</location>
        <topology evidence="3 4 5 6">Peripheral membrane protein</topology>
        <orientation evidence="10 11 12">Matrix side</orientation>
    </subcellularLocation>
</comment>
<comment type="similarity">
    <text evidence="9">Belongs to the ATPase alpha/beta chains family.</text>
</comment>
<evidence type="ECO:0000250" key="1">
    <source>
        <dbReference type="UniProtKB" id="P00829"/>
    </source>
</evidence>
<evidence type="ECO:0000255" key="2">
    <source>
        <dbReference type="RuleBase" id="RU003553"/>
    </source>
</evidence>
<evidence type="ECO:0000269" key="3">
    <source>
    </source>
</evidence>
<evidence type="ECO:0000269" key="4">
    <source>
    </source>
</evidence>
<evidence type="ECO:0000269" key="5">
    <source>
    </source>
</evidence>
<evidence type="ECO:0000269" key="6">
    <source>
    </source>
</evidence>
<evidence type="ECO:0000303" key="7">
    <source>
    </source>
</evidence>
<evidence type="ECO:0000303" key="8">
    <source>
    </source>
</evidence>
<evidence type="ECO:0000305" key="9"/>
<evidence type="ECO:0000305" key="10">
    <source>
    </source>
</evidence>
<evidence type="ECO:0000305" key="11">
    <source>
    </source>
</evidence>
<evidence type="ECO:0000305" key="12">
    <source>
    </source>
</evidence>
<evidence type="ECO:0000312" key="13">
    <source>
        <dbReference type="EMBL" id="AAG23340.1"/>
    </source>
</evidence>
<evidence type="ECO:0007744" key="14">
    <source>
        <dbReference type="PDB" id="6F5D"/>
    </source>
</evidence>
<reference evidence="13" key="1">
    <citation type="journal article" date="2001" name="Mol. Biochem. Parasitol.">
        <title>Cloning and characterization of the subunits comprising the catalytic core of the Trypanosoma brucei mitochondrial ATP synthase.</title>
        <authorList>
            <person name="Brown S.V."/>
            <person name="Stanislawski A."/>
            <person name="Perry Q.L."/>
            <person name="Williams N."/>
        </authorList>
    </citation>
    <scope>NUCLEOTIDE SEQUENCE [MRNA]</scope>
    <scope>PROTEIN SEQUENCE OF 22-40</scope>
    <scope>SUBCELLULAR LOCATION</scope>
    <scope>SUBUNIT</scope>
    <source>
        <strain evidence="7">Treu 667</strain>
    </source>
</reference>
<reference key="2">
    <citation type="journal article" date="2018" name="Proc. Natl. Acad. Sci. U.S.A.">
        <title>ATP synthase from Trypanosoma brucei has an elaborated canonical F1-domain and conventional catalytic sites.</title>
        <authorList>
            <person name="Montgomery M.G."/>
            <person name="Gahura O."/>
            <person name="Leslie A.G.W."/>
            <person name="Zikova A."/>
            <person name="Walker J.E."/>
        </authorList>
    </citation>
    <scope>NUCLEOTIDE SEQUENCE [GENOMIC DNA]</scope>
    <scope>X-RAY CRYSTALLOGRAPHY (3.2 ANGSTROMS) OF 22-519 IN COMPLEX WITH ATP</scope>
    <scope>FUNCTION</scope>
    <scope>SUBUNIT</scope>
    <scope>SUBCELLULAR LOCATION</scope>
    <source>
        <strain>427</strain>
    </source>
</reference>
<reference key="3">
    <citation type="journal article" date="2009" name="PLoS Pathog.">
        <title>The F(0)F(1)-ATP synthase complex contains novel subunits and is essential for procyclic Trypanosoma brucei.</title>
        <authorList>
            <person name="Zikova A."/>
            <person name="Schnaufer A."/>
            <person name="Dalley R.A."/>
            <person name="Panigrahi A.K."/>
            <person name="Stuart K.D."/>
        </authorList>
    </citation>
    <scope>FUNCTION</scope>
    <scope>SUBCELLULAR LOCATION</scope>
    <scope>SUBUNIT</scope>
    <scope>IDENTIFICATION BY MASS SPECTROMETRY</scope>
    <scope>NOMENCLATURE</scope>
    <source>
        <strain>427</strain>
    </source>
</reference>
<reference key="4">
    <citation type="journal article" date="2018" name="FEBS J.">
        <title>The F1-ATPase from Trypanosoma brucei is elaborated by three copies of an additional p18-subunit.</title>
        <authorList>
            <person name="Gahura O."/>
            <person name="Subrtova K."/>
            <person name="Vachova H."/>
            <person name="Panicucci B."/>
            <person name="Fearnley I.M."/>
            <person name="Harbour M.E."/>
            <person name="Walker J.E."/>
            <person name="Zikova A."/>
        </authorList>
    </citation>
    <scope>FUNCTION</scope>
    <scope>CATALYTIC ACTIVITY</scope>
    <scope>PROTEIN SEQUENCE OF 22-26</scope>
    <scope>SUBCELLULAR LOCATION</scope>
    <scope>SUBUNIT</scope>
    <scope>IDENTIFICATION BY MASS SPECTROMETRY</scope>
    <source>
        <strain>427</strain>
    </source>
</reference>
<protein>
    <recommendedName>
        <fullName>ATP synthase subunit beta, mitochondrial</fullName>
        <ecNumber evidence="2 11">7.1.2.2</ecNumber>
    </recommendedName>
    <alternativeName>
        <fullName evidence="8">ATP synthase F1 subunit beta</fullName>
    </alternativeName>
</protein>
<sequence>MLTRFRSAVLRGAVSITGARAASTAPVADHKGRVGHVSQVIGAVVDVHFADGVPPVLTALDVVDKLGRDEPLTLEIVQHLDAHTGRCIAMQTTDLLKLKAKVVSTGGNISVPVGRETLGRIFNVLGDAIDQRGPVGEKLRMPIHAVAPKLADQAAEDAVLTTGIKVIDLILPYCKGGKIGLFGGAGVGKTVIIMELINNVAKGHGGFSVFAGVGERTREGTDLYLEMMQSKVIDLKGESKCVLVYGQMNEPPGARARVAQSALTMAEYFRDVEGQDVLLFIDNIFRFTQANSEVSALLGRIPAAVGYQPTLAEDLGQLQERITSTTKGSITSVQAVYVPADDITDPAPATTFSHLDATTVLDRAVAESGIYPAVNPLECASRIMDPDVISVDHYNVAQDVVQMLTKYRELQDIIAVLGIDELSEEDKLIVDRARKLVKFLSQPFQVAEVFTGMTGHYVQLDDTIDSFSGLLMGTYDQVPEMAFYMVGGINSVLEKAKKMAEEAAELEKMRRARVAQASS</sequence>
<feature type="transit peptide" description="Mitochondrion" evidence="3 5">
    <location>
        <begin position="1"/>
        <end position="21"/>
    </location>
</feature>
<feature type="chain" id="PRO_0000444142" description="ATP synthase subunit beta, mitochondrial">
    <location>
        <begin position="22"/>
        <end position="519"/>
    </location>
</feature>
<feature type="binding site" evidence="6 14">
    <location>
        <begin position="184"/>
        <end position="191"/>
    </location>
    <ligand>
        <name>ATP</name>
        <dbReference type="ChEBI" id="CHEBI:30616"/>
    </ligand>
</feature>
<feature type="binding site" evidence="1">
    <location>
        <position position="216"/>
    </location>
    <ligand>
        <name>ATP</name>
        <dbReference type="ChEBI" id="CHEBI:30616"/>
    </ligand>
</feature>
<feature type="sequence conflict" description="In Ref. 1; AAG23340." ref="1">
    <original>SQPFQVA</original>
    <variation>PAIPSC</variation>
    <location>
        <begin position="441"/>
        <end position="447"/>
    </location>
</feature>
<dbReference type="EC" id="7.1.2.2" evidence="2 11"/>
<dbReference type="EMBL" id="AY007706">
    <property type="protein sequence ID" value="AAG23340.1"/>
    <property type="molecule type" value="mRNA"/>
</dbReference>
<dbReference type="EMBL" id="LS423644">
    <property type="protein sequence ID" value="SPS16790.1"/>
    <property type="molecule type" value="Genomic_DNA"/>
</dbReference>
<dbReference type="PDB" id="6F5D">
    <property type="method" value="X-ray"/>
    <property type="resolution" value="3.20 A"/>
    <property type="chains" value="D/E/F=22-519"/>
</dbReference>
<dbReference type="PDB" id="8AP6">
    <property type="method" value="EM"/>
    <property type="resolution" value="3.20 A"/>
    <property type="chains" value="D1/D2/E1/E2/F1/F2=1-519"/>
</dbReference>
<dbReference type="PDB" id="8APA">
    <property type="method" value="EM"/>
    <property type="resolution" value="3.70 A"/>
    <property type="chains" value="D1/E1/F1=1-519"/>
</dbReference>
<dbReference type="PDB" id="8APB">
    <property type="method" value="EM"/>
    <property type="resolution" value="3.80 A"/>
    <property type="chains" value="D1/E1/F1=1-519"/>
</dbReference>
<dbReference type="PDB" id="8APC">
    <property type="method" value="EM"/>
    <property type="resolution" value="3.50 A"/>
    <property type="chains" value="D1/E1/F1=1-519"/>
</dbReference>
<dbReference type="PDB" id="8APD">
    <property type="method" value="EM"/>
    <property type="resolution" value="3.70 A"/>
    <property type="chains" value="D1/E1/F1=1-519"/>
</dbReference>
<dbReference type="PDB" id="8APE">
    <property type="method" value="EM"/>
    <property type="resolution" value="3.70 A"/>
    <property type="chains" value="D1/E1/F1=1-519"/>
</dbReference>
<dbReference type="PDB" id="8APF">
    <property type="method" value="EM"/>
    <property type="resolution" value="4.30 A"/>
    <property type="chains" value="D1/E1/F1=1-519"/>
</dbReference>
<dbReference type="PDB" id="8APG">
    <property type="method" value="EM"/>
    <property type="resolution" value="3.50 A"/>
    <property type="chains" value="D1/E1/F1=1-519"/>
</dbReference>
<dbReference type="PDB" id="8APH">
    <property type="method" value="EM"/>
    <property type="resolution" value="3.80 A"/>
    <property type="chains" value="D1/E1/F1=1-519"/>
</dbReference>
<dbReference type="PDB" id="8APJ">
    <property type="method" value="EM"/>
    <property type="resolution" value="3.80 A"/>
    <property type="chains" value="D1/E1/F1=1-519"/>
</dbReference>
<dbReference type="PDB" id="8APK">
    <property type="method" value="EM"/>
    <property type="resolution" value="3.70 A"/>
    <property type="chains" value="D1/E1/F1=1-519"/>
</dbReference>
<dbReference type="PDBsum" id="6F5D"/>
<dbReference type="PDBsum" id="8AP6"/>
<dbReference type="PDBsum" id="8APA"/>
<dbReference type="PDBsum" id="8APB"/>
<dbReference type="PDBsum" id="8APC"/>
<dbReference type="PDBsum" id="8APD"/>
<dbReference type="PDBsum" id="8APE"/>
<dbReference type="PDBsum" id="8APF"/>
<dbReference type="PDBsum" id="8APG"/>
<dbReference type="PDBsum" id="8APH"/>
<dbReference type="PDBsum" id="8APJ"/>
<dbReference type="PDBsum" id="8APK"/>
<dbReference type="EMDB" id="EMD-15559"/>
<dbReference type="EMDB" id="EMD-15563"/>
<dbReference type="EMDB" id="EMD-15564"/>
<dbReference type="EMDB" id="EMD-15565"/>
<dbReference type="EMDB" id="EMD-15566"/>
<dbReference type="EMDB" id="EMD-15567"/>
<dbReference type="EMDB" id="EMD-15568"/>
<dbReference type="EMDB" id="EMD-15570"/>
<dbReference type="EMDB" id="EMD-15571"/>
<dbReference type="EMDB" id="EMD-15572"/>
<dbReference type="EMDB" id="EMD-15573"/>
<dbReference type="SMR" id="Q9GPE9"/>
<dbReference type="TCDB" id="3.A.2.1.13">
    <property type="family name" value="the h+- or na+-translocating f-type, v-type and a-type atpase (f-atpase) superfamily"/>
</dbReference>
<dbReference type="OMA" id="SMEEGGW"/>
<dbReference type="GO" id="GO:0005743">
    <property type="term" value="C:mitochondrial inner membrane"/>
    <property type="evidence" value="ECO:0007669"/>
    <property type="project" value="UniProtKB-SubCell"/>
</dbReference>
<dbReference type="GO" id="GO:0045259">
    <property type="term" value="C:proton-transporting ATP synthase complex"/>
    <property type="evidence" value="ECO:0007669"/>
    <property type="project" value="UniProtKB-KW"/>
</dbReference>
<dbReference type="GO" id="GO:0005524">
    <property type="term" value="F:ATP binding"/>
    <property type="evidence" value="ECO:0007669"/>
    <property type="project" value="UniProtKB-KW"/>
</dbReference>
<dbReference type="GO" id="GO:0016887">
    <property type="term" value="F:ATP hydrolysis activity"/>
    <property type="evidence" value="ECO:0007669"/>
    <property type="project" value="InterPro"/>
</dbReference>
<dbReference type="GO" id="GO:0046933">
    <property type="term" value="F:proton-transporting ATP synthase activity, rotational mechanism"/>
    <property type="evidence" value="ECO:0007669"/>
    <property type="project" value="InterPro"/>
</dbReference>
<dbReference type="GO" id="GO:0042776">
    <property type="term" value="P:proton motive force-driven mitochondrial ATP synthesis"/>
    <property type="evidence" value="ECO:0007669"/>
    <property type="project" value="TreeGrafter"/>
</dbReference>
<dbReference type="CDD" id="cd18110">
    <property type="entry name" value="ATP-synt_F1_beta_C"/>
    <property type="match status" value="1"/>
</dbReference>
<dbReference type="CDD" id="cd18115">
    <property type="entry name" value="ATP-synt_F1_beta_N"/>
    <property type="match status" value="1"/>
</dbReference>
<dbReference type="CDD" id="cd01133">
    <property type="entry name" value="F1-ATPase_beta_CD"/>
    <property type="match status" value="1"/>
</dbReference>
<dbReference type="FunFam" id="1.10.1140.10:FF:000005">
    <property type="entry name" value="ATP synthase subunit beta"/>
    <property type="match status" value="1"/>
</dbReference>
<dbReference type="FunFam" id="3.40.50.300:FF:000026">
    <property type="entry name" value="ATP synthase subunit beta"/>
    <property type="match status" value="1"/>
</dbReference>
<dbReference type="Gene3D" id="2.40.10.170">
    <property type="match status" value="1"/>
</dbReference>
<dbReference type="Gene3D" id="1.10.1140.10">
    <property type="entry name" value="Bovine Mitochondrial F1-atpase, Atp Synthase Beta Chain, Chain D, domain 3"/>
    <property type="match status" value="1"/>
</dbReference>
<dbReference type="Gene3D" id="3.40.50.300">
    <property type="entry name" value="P-loop containing nucleotide triphosphate hydrolases"/>
    <property type="match status" value="1"/>
</dbReference>
<dbReference type="HAMAP" id="MF_01347">
    <property type="entry name" value="ATP_synth_beta_bact"/>
    <property type="match status" value="1"/>
</dbReference>
<dbReference type="InterPro" id="IPR003593">
    <property type="entry name" value="AAA+_ATPase"/>
</dbReference>
<dbReference type="InterPro" id="IPR055190">
    <property type="entry name" value="ATP-synt_VA_C"/>
</dbReference>
<dbReference type="InterPro" id="IPR005722">
    <property type="entry name" value="ATP_synth_F1_bsu"/>
</dbReference>
<dbReference type="InterPro" id="IPR050053">
    <property type="entry name" value="ATPase_alpha/beta_chains"/>
</dbReference>
<dbReference type="InterPro" id="IPR004100">
    <property type="entry name" value="ATPase_F1/V1/A1_a/bsu_N"/>
</dbReference>
<dbReference type="InterPro" id="IPR036121">
    <property type="entry name" value="ATPase_F1/V1/A1_a/bsu_N_sf"/>
</dbReference>
<dbReference type="InterPro" id="IPR000194">
    <property type="entry name" value="ATPase_F1/V1/A1_a/bsu_nucl-bd"/>
</dbReference>
<dbReference type="InterPro" id="IPR024034">
    <property type="entry name" value="ATPase_F1/V1_b/a_C"/>
</dbReference>
<dbReference type="InterPro" id="IPR027417">
    <property type="entry name" value="P-loop_NTPase"/>
</dbReference>
<dbReference type="NCBIfam" id="TIGR01039">
    <property type="entry name" value="atpD"/>
    <property type="match status" value="1"/>
</dbReference>
<dbReference type="PANTHER" id="PTHR15184">
    <property type="entry name" value="ATP SYNTHASE"/>
    <property type="match status" value="1"/>
</dbReference>
<dbReference type="PANTHER" id="PTHR15184:SF71">
    <property type="entry name" value="ATP SYNTHASE SUBUNIT BETA, MITOCHONDRIAL"/>
    <property type="match status" value="1"/>
</dbReference>
<dbReference type="Pfam" id="PF00006">
    <property type="entry name" value="ATP-synt_ab"/>
    <property type="match status" value="1"/>
</dbReference>
<dbReference type="Pfam" id="PF02874">
    <property type="entry name" value="ATP-synt_ab_N"/>
    <property type="match status" value="1"/>
</dbReference>
<dbReference type="Pfam" id="PF22919">
    <property type="entry name" value="ATP-synt_VA_C"/>
    <property type="match status" value="1"/>
</dbReference>
<dbReference type="SMART" id="SM00382">
    <property type="entry name" value="AAA"/>
    <property type="match status" value="1"/>
</dbReference>
<dbReference type="SUPFAM" id="SSF47917">
    <property type="entry name" value="C-terminal domain of alpha and beta subunits of F1 ATP synthase"/>
    <property type="match status" value="1"/>
</dbReference>
<dbReference type="SUPFAM" id="SSF50615">
    <property type="entry name" value="N-terminal domain of alpha and beta subunits of F1 ATP synthase"/>
    <property type="match status" value="1"/>
</dbReference>
<dbReference type="SUPFAM" id="SSF52540">
    <property type="entry name" value="P-loop containing nucleoside triphosphate hydrolases"/>
    <property type="match status" value="1"/>
</dbReference>
<name>ATPB_TRYBB</name>